<name>PUR9_VIBC3</name>
<evidence type="ECO:0000255" key="1">
    <source>
        <dbReference type="HAMAP-Rule" id="MF_00139"/>
    </source>
</evidence>
<evidence type="ECO:0000255" key="2">
    <source>
        <dbReference type="PROSITE-ProRule" id="PRU01202"/>
    </source>
</evidence>
<gene>
    <name evidence="1" type="primary">purH</name>
    <name type="ordered locus">VC0395_A2653</name>
    <name type="ordered locus">VC395_0305</name>
</gene>
<dbReference type="EC" id="2.1.2.3" evidence="1"/>
<dbReference type="EC" id="3.5.4.10" evidence="1"/>
<dbReference type="EMBL" id="CP000627">
    <property type="protein sequence ID" value="ABQ20331.1"/>
    <property type="molecule type" value="Genomic_DNA"/>
</dbReference>
<dbReference type="EMBL" id="CP001235">
    <property type="protein sequence ID" value="ACP08328.1"/>
    <property type="molecule type" value="Genomic_DNA"/>
</dbReference>
<dbReference type="RefSeq" id="WP_001057884.1">
    <property type="nucleotide sequence ID" value="NZ_JAACZH010000020.1"/>
</dbReference>
<dbReference type="SMR" id="A5F3U8"/>
<dbReference type="KEGG" id="vco:VC0395_A2653"/>
<dbReference type="KEGG" id="vcr:VC395_0305"/>
<dbReference type="PATRIC" id="fig|345073.21.peg.292"/>
<dbReference type="eggNOG" id="COG0138">
    <property type="taxonomic scope" value="Bacteria"/>
</dbReference>
<dbReference type="HOGENOM" id="CLU_016316_5_2_6"/>
<dbReference type="OrthoDB" id="9802065at2"/>
<dbReference type="UniPathway" id="UPA00074">
    <property type="reaction ID" value="UER00133"/>
</dbReference>
<dbReference type="UniPathway" id="UPA00074">
    <property type="reaction ID" value="UER00135"/>
</dbReference>
<dbReference type="Proteomes" id="UP000000249">
    <property type="component" value="Chromosome 2"/>
</dbReference>
<dbReference type="GO" id="GO:0005829">
    <property type="term" value="C:cytosol"/>
    <property type="evidence" value="ECO:0007669"/>
    <property type="project" value="TreeGrafter"/>
</dbReference>
<dbReference type="GO" id="GO:0003937">
    <property type="term" value="F:IMP cyclohydrolase activity"/>
    <property type="evidence" value="ECO:0007669"/>
    <property type="project" value="UniProtKB-UniRule"/>
</dbReference>
<dbReference type="GO" id="GO:0004643">
    <property type="term" value="F:phosphoribosylaminoimidazolecarboxamide formyltransferase activity"/>
    <property type="evidence" value="ECO:0007669"/>
    <property type="project" value="UniProtKB-UniRule"/>
</dbReference>
<dbReference type="GO" id="GO:0006189">
    <property type="term" value="P:'de novo' IMP biosynthetic process"/>
    <property type="evidence" value="ECO:0007669"/>
    <property type="project" value="UniProtKB-UniRule"/>
</dbReference>
<dbReference type="CDD" id="cd01421">
    <property type="entry name" value="IMPCH"/>
    <property type="match status" value="1"/>
</dbReference>
<dbReference type="FunFam" id="3.40.140.20:FF:000001">
    <property type="entry name" value="Bifunctional purine biosynthesis protein PurH"/>
    <property type="match status" value="1"/>
</dbReference>
<dbReference type="FunFam" id="3.40.140.20:FF:000002">
    <property type="entry name" value="Bifunctional purine biosynthesis protein PurH"/>
    <property type="match status" value="1"/>
</dbReference>
<dbReference type="FunFam" id="3.40.50.1380:FF:000001">
    <property type="entry name" value="Bifunctional purine biosynthesis protein PurH"/>
    <property type="match status" value="1"/>
</dbReference>
<dbReference type="Gene3D" id="3.40.140.20">
    <property type="match status" value="2"/>
</dbReference>
<dbReference type="Gene3D" id="3.40.50.1380">
    <property type="entry name" value="Methylglyoxal synthase-like domain"/>
    <property type="match status" value="1"/>
</dbReference>
<dbReference type="HAMAP" id="MF_00139">
    <property type="entry name" value="PurH"/>
    <property type="match status" value="1"/>
</dbReference>
<dbReference type="InterPro" id="IPR024051">
    <property type="entry name" value="AICAR_Tfase_dup_dom_sf"/>
</dbReference>
<dbReference type="InterPro" id="IPR016193">
    <property type="entry name" value="Cytidine_deaminase-like"/>
</dbReference>
<dbReference type="InterPro" id="IPR011607">
    <property type="entry name" value="MGS-like_dom"/>
</dbReference>
<dbReference type="InterPro" id="IPR036914">
    <property type="entry name" value="MGS-like_dom_sf"/>
</dbReference>
<dbReference type="InterPro" id="IPR002695">
    <property type="entry name" value="PurH-like"/>
</dbReference>
<dbReference type="NCBIfam" id="NF002049">
    <property type="entry name" value="PRK00881.1"/>
    <property type="match status" value="1"/>
</dbReference>
<dbReference type="NCBIfam" id="TIGR00355">
    <property type="entry name" value="purH"/>
    <property type="match status" value="1"/>
</dbReference>
<dbReference type="PANTHER" id="PTHR11692:SF0">
    <property type="entry name" value="BIFUNCTIONAL PURINE BIOSYNTHESIS PROTEIN ATIC"/>
    <property type="match status" value="1"/>
</dbReference>
<dbReference type="PANTHER" id="PTHR11692">
    <property type="entry name" value="BIFUNCTIONAL PURINE BIOSYNTHESIS PROTEIN PURH"/>
    <property type="match status" value="1"/>
</dbReference>
<dbReference type="Pfam" id="PF01808">
    <property type="entry name" value="AICARFT_IMPCHas"/>
    <property type="match status" value="1"/>
</dbReference>
<dbReference type="Pfam" id="PF02142">
    <property type="entry name" value="MGS"/>
    <property type="match status" value="1"/>
</dbReference>
<dbReference type="PIRSF" id="PIRSF000414">
    <property type="entry name" value="AICARFT_IMPCHas"/>
    <property type="match status" value="1"/>
</dbReference>
<dbReference type="SMART" id="SM00798">
    <property type="entry name" value="AICARFT_IMPCHas"/>
    <property type="match status" value="1"/>
</dbReference>
<dbReference type="SMART" id="SM00851">
    <property type="entry name" value="MGS"/>
    <property type="match status" value="1"/>
</dbReference>
<dbReference type="SUPFAM" id="SSF53927">
    <property type="entry name" value="Cytidine deaminase-like"/>
    <property type="match status" value="1"/>
</dbReference>
<dbReference type="SUPFAM" id="SSF52335">
    <property type="entry name" value="Methylglyoxal synthase-like"/>
    <property type="match status" value="1"/>
</dbReference>
<dbReference type="PROSITE" id="PS51855">
    <property type="entry name" value="MGS"/>
    <property type="match status" value="1"/>
</dbReference>
<organism>
    <name type="scientific">Vibrio cholerae serotype O1 (strain ATCC 39541 / Classical Ogawa 395 / O395)</name>
    <dbReference type="NCBI Taxonomy" id="345073"/>
    <lineage>
        <taxon>Bacteria</taxon>
        <taxon>Pseudomonadati</taxon>
        <taxon>Pseudomonadota</taxon>
        <taxon>Gammaproteobacteria</taxon>
        <taxon>Vibrionales</taxon>
        <taxon>Vibrionaceae</taxon>
        <taxon>Vibrio</taxon>
    </lineage>
</organism>
<accession>A5F3U8</accession>
<accession>C3M3S0</accession>
<sequence length="530" mass="57297">MNNARPIHRALLSVSDKTGIVEFAKALAERGVELLSTGGTARLLAEQGLTVTEVSDYTGFPEMMDGRVKTLHPKVHGGILGRRGQDDAVMNTHGIQPIDMVVVNLYPFAQTVANPNCTLADAVENIDIGGPTMVRSAAKNHKDVAIVVNAHDYDRVIREMDANHNSLTLATRFDLAIAAFEHTAAYDGMIANYFGTLVPSYGDNKEGDEESKFPRTFNAQFIKKQDMRYGENSHQAAAFYVEANPQEASVATARQIQGKALSYNNIADTDAALECVKEFSEPACVIVKHANPCGVALGDDLLQAYNRAYQTDPTSAFGGIIAFNRELDGETARAIIERQFVEVIIAPKVSQAAIDIVAAKQNVRLLECGEWQGQTTGFDLKRVNGGLLVQDRDQGMVAQDDLQVVSTRQPSDAELKDALFCWKVAKYVKSNAIVYAKGDMAIGIGAGQMSRVYSAKIAGIKAADEGLEVAGSVMASDAFFPFRDGIDAAAEAGITCVIQPGGSMRDQEVIDAANEHGMAMIFTGMRHFRH</sequence>
<reference key="1">
    <citation type="submission" date="2007-03" db="EMBL/GenBank/DDBJ databases">
        <authorList>
            <person name="Heidelberg J."/>
        </authorList>
    </citation>
    <scope>NUCLEOTIDE SEQUENCE [LARGE SCALE GENOMIC DNA]</scope>
    <source>
        <strain>ATCC 39541 / Classical Ogawa 395 / O395</strain>
    </source>
</reference>
<reference key="2">
    <citation type="journal article" date="2008" name="PLoS ONE">
        <title>A recalibrated molecular clock and independent origins for the cholera pandemic clones.</title>
        <authorList>
            <person name="Feng L."/>
            <person name="Reeves P.R."/>
            <person name="Lan R."/>
            <person name="Ren Y."/>
            <person name="Gao C."/>
            <person name="Zhou Z."/>
            <person name="Ren Y."/>
            <person name="Cheng J."/>
            <person name="Wang W."/>
            <person name="Wang J."/>
            <person name="Qian W."/>
            <person name="Li D."/>
            <person name="Wang L."/>
        </authorList>
    </citation>
    <scope>NUCLEOTIDE SEQUENCE [LARGE SCALE GENOMIC DNA]</scope>
    <source>
        <strain>ATCC 39541 / Classical Ogawa 395 / O395</strain>
    </source>
</reference>
<comment type="catalytic activity">
    <reaction evidence="1">
        <text>(6R)-10-formyltetrahydrofolate + 5-amino-1-(5-phospho-beta-D-ribosyl)imidazole-4-carboxamide = 5-formamido-1-(5-phospho-D-ribosyl)imidazole-4-carboxamide + (6S)-5,6,7,8-tetrahydrofolate</text>
        <dbReference type="Rhea" id="RHEA:22192"/>
        <dbReference type="ChEBI" id="CHEBI:57453"/>
        <dbReference type="ChEBI" id="CHEBI:58467"/>
        <dbReference type="ChEBI" id="CHEBI:58475"/>
        <dbReference type="ChEBI" id="CHEBI:195366"/>
        <dbReference type="EC" id="2.1.2.3"/>
    </reaction>
</comment>
<comment type="catalytic activity">
    <reaction evidence="1">
        <text>IMP + H2O = 5-formamido-1-(5-phospho-D-ribosyl)imidazole-4-carboxamide</text>
        <dbReference type="Rhea" id="RHEA:18445"/>
        <dbReference type="ChEBI" id="CHEBI:15377"/>
        <dbReference type="ChEBI" id="CHEBI:58053"/>
        <dbReference type="ChEBI" id="CHEBI:58467"/>
        <dbReference type="EC" id="3.5.4.10"/>
    </reaction>
</comment>
<comment type="pathway">
    <text evidence="1">Purine metabolism; IMP biosynthesis via de novo pathway; 5-formamido-1-(5-phospho-D-ribosyl)imidazole-4-carboxamide from 5-amino-1-(5-phospho-D-ribosyl)imidazole-4-carboxamide (10-formyl THF route): step 1/1.</text>
</comment>
<comment type="pathway">
    <text evidence="1">Purine metabolism; IMP biosynthesis via de novo pathway; IMP from 5-formamido-1-(5-phospho-D-ribosyl)imidazole-4-carboxamide: step 1/1.</text>
</comment>
<comment type="domain">
    <text evidence="1">The IMP cyclohydrolase activity resides in the N-terminal region.</text>
</comment>
<comment type="similarity">
    <text evidence="1">Belongs to the PurH family.</text>
</comment>
<proteinExistence type="inferred from homology"/>
<keyword id="KW-0378">Hydrolase</keyword>
<keyword id="KW-0511">Multifunctional enzyme</keyword>
<keyword id="KW-0658">Purine biosynthesis</keyword>
<keyword id="KW-0808">Transferase</keyword>
<feature type="chain" id="PRO_1000071453" description="Bifunctional purine biosynthesis protein PurH">
    <location>
        <begin position="1"/>
        <end position="530"/>
    </location>
</feature>
<feature type="domain" description="MGS-like" evidence="2">
    <location>
        <begin position="1"/>
        <end position="148"/>
    </location>
</feature>
<protein>
    <recommendedName>
        <fullName evidence="1">Bifunctional purine biosynthesis protein PurH</fullName>
    </recommendedName>
    <domain>
        <recommendedName>
            <fullName evidence="1">Phosphoribosylaminoimidazolecarboxamide formyltransferase</fullName>
            <ecNumber evidence="1">2.1.2.3</ecNumber>
        </recommendedName>
        <alternativeName>
            <fullName evidence="1">AICAR transformylase</fullName>
        </alternativeName>
    </domain>
    <domain>
        <recommendedName>
            <fullName evidence="1">IMP cyclohydrolase</fullName>
            <ecNumber evidence="1">3.5.4.10</ecNumber>
        </recommendedName>
        <alternativeName>
            <fullName evidence="1">ATIC</fullName>
        </alternativeName>
        <alternativeName>
            <fullName evidence="1">IMP synthase</fullName>
        </alternativeName>
        <alternativeName>
            <fullName evidence="1">Inosinicase</fullName>
        </alternativeName>
    </domain>
</protein>